<gene>
    <name evidence="1" type="primary">kdsB</name>
    <name type="ordered locus">Plav_0251</name>
</gene>
<dbReference type="EC" id="2.7.7.38" evidence="1"/>
<dbReference type="EMBL" id="CP000774">
    <property type="protein sequence ID" value="ABS61874.1"/>
    <property type="molecule type" value="Genomic_DNA"/>
</dbReference>
<dbReference type="RefSeq" id="WP_011995165.1">
    <property type="nucleotide sequence ID" value="NC_009719.1"/>
</dbReference>
<dbReference type="SMR" id="A7HPP1"/>
<dbReference type="STRING" id="402881.Plav_0251"/>
<dbReference type="KEGG" id="pla:Plav_0251"/>
<dbReference type="eggNOG" id="COG1212">
    <property type="taxonomic scope" value="Bacteria"/>
</dbReference>
<dbReference type="HOGENOM" id="CLU_065038_0_1_5"/>
<dbReference type="OrthoDB" id="9815559at2"/>
<dbReference type="UniPathway" id="UPA00030"/>
<dbReference type="UniPathway" id="UPA00358">
    <property type="reaction ID" value="UER00476"/>
</dbReference>
<dbReference type="Proteomes" id="UP000006377">
    <property type="component" value="Chromosome"/>
</dbReference>
<dbReference type="GO" id="GO:0005829">
    <property type="term" value="C:cytosol"/>
    <property type="evidence" value="ECO:0007669"/>
    <property type="project" value="TreeGrafter"/>
</dbReference>
<dbReference type="GO" id="GO:0008690">
    <property type="term" value="F:3-deoxy-manno-octulosonate cytidylyltransferase activity"/>
    <property type="evidence" value="ECO:0007669"/>
    <property type="project" value="UniProtKB-UniRule"/>
</dbReference>
<dbReference type="GO" id="GO:0033468">
    <property type="term" value="P:CMP-keto-3-deoxy-D-manno-octulosonic acid biosynthetic process"/>
    <property type="evidence" value="ECO:0007669"/>
    <property type="project" value="UniProtKB-UniRule"/>
</dbReference>
<dbReference type="GO" id="GO:0009103">
    <property type="term" value="P:lipopolysaccharide biosynthetic process"/>
    <property type="evidence" value="ECO:0007669"/>
    <property type="project" value="UniProtKB-UniRule"/>
</dbReference>
<dbReference type="CDD" id="cd02517">
    <property type="entry name" value="CMP-KDO-Synthetase"/>
    <property type="match status" value="1"/>
</dbReference>
<dbReference type="Gene3D" id="3.90.550.10">
    <property type="entry name" value="Spore Coat Polysaccharide Biosynthesis Protein SpsA, Chain A"/>
    <property type="match status" value="1"/>
</dbReference>
<dbReference type="HAMAP" id="MF_00057">
    <property type="entry name" value="KdsB"/>
    <property type="match status" value="1"/>
</dbReference>
<dbReference type="InterPro" id="IPR003329">
    <property type="entry name" value="Cytidylyl_trans"/>
</dbReference>
<dbReference type="InterPro" id="IPR004528">
    <property type="entry name" value="KdsB"/>
</dbReference>
<dbReference type="InterPro" id="IPR029044">
    <property type="entry name" value="Nucleotide-diphossugar_trans"/>
</dbReference>
<dbReference type="NCBIfam" id="TIGR00466">
    <property type="entry name" value="kdsB"/>
    <property type="match status" value="1"/>
</dbReference>
<dbReference type="NCBIfam" id="NF003948">
    <property type="entry name" value="PRK05450.1-1"/>
    <property type="match status" value="1"/>
</dbReference>
<dbReference type="NCBIfam" id="NF003952">
    <property type="entry name" value="PRK05450.1-5"/>
    <property type="match status" value="1"/>
</dbReference>
<dbReference type="PANTHER" id="PTHR42866">
    <property type="entry name" value="3-DEOXY-MANNO-OCTULOSONATE CYTIDYLYLTRANSFERASE"/>
    <property type="match status" value="1"/>
</dbReference>
<dbReference type="PANTHER" id="PTHR42866:SF2">
    <property type="entry name" value="3-DEOXY-MANNO-OCTULOSONATE CYTIDYLYLTRANSFERASE, MITOCHONDRIAL"/>
    <property type="match status" value="1"/>
</dbReference>
<dbReference type="Pfam" id="PF02348">
    <property type="entry name" value="CTP_transf_3"/>
    <property type="match status" value="1"/>
</dbReference>
<dbReference type="SUPFAM" id="SSF53448">
    <property type="entry name" value="Nucleotide-diphospho-sugar transferases"/>
    <property type="match status" value="1"/>
</dbReference>
<accession>A7HPP1</accession>
<reference key="1">
    <citation type="journal article" date="2011" name="Stand. Genomic Sci.">
        <title>Complete genome sequence of Parvibaculum lavamentivorans type strain (DS-1(T)).</title>
        <authorList>
            <person name="Schleheck D."/>
            <person name="Weiss M."/>
            <person name="Pitluck S."/>
            <person name="Bruce D."/>
            <person name="Land M.L."/>
            <person name="Han S."/>
            <person name="Saunders E."/>
            <person name="Tapia R."/>
            <person name="Detter C."/>
            <person name="Brettin T."/>
            <person name="Han J."/>
            <person name="Woyke T."/>
            <person name="Goodwin L."/>
            <person name="Pennacchio L."/>
            <person name="Nolan M."/>
            <person name="Cook A.M."/>
            <person name="Kjelleberg S."/>
            <person name="Thomas T."/>
        </authorList>
    </citation>
    <scope>NUCLEOTIDE SEQUENCE [LARGE SCALE GENOMIC DNA]</scope>
    <source>
        <strain>DS-1 / DSM 13023 / NCIMB 13966</strain>
    </source>
</reference>
<evidence type="ECO:0000255" key="1">
    <source>
        <dbReference type="HAMAP-Rule" id="MF_00057"/>
    </source>
</evidence>
<comment type="function">
    <text evidence="1">Activates KDO (a required 8-carbon sugar) for incorporation into bacterial lipopolysaccharide in Gram-negative bacteria.</text>
</comment>
<comment type="catalytic activity">
    <reaction evidence="1">
        <text>3-deoxy-alpha-D-manno-oct-2-ulosonate + CTP = CMP-3-deoxy-beta-D-manno-octulosonate + diphosphate</text>
        <dbReference type="Rhea" id="RHEA:23448"/>
        <dbReference type="ChEBI" id="CHEBI:33019"/>
        <dbReference type="ChEBI" id="CHEBI:37563"/>
        <dbReference type="ChEBI" id="CHEBI:85986"/>
        <dbReference type="ChEBI" id="CHEBI:85987"/>
        <dbReference type="EC" id="2.7.7.38"/>
    </reaction>
</comment>
<comment type="pathway">
    <text evidence="1">Nucleotide-sugar biosynthesis; CMP-3-deoxy-D-manno-octulosonate biosynthesis; CMP-3-deoxy-D-manno-octulosonate from 3-deoxy-D-manno-octulosonate and CTP: step 1/1.</text>
</comment>
<comment type="pathway">
    <text evidence="1">Bacterial outer membrane biogenesis; lipopolysaccharide biosynthesis.</text>
</comment>
<comment type="subcellular location">
    <subcellularLocation>
        <location evidence="1">Cytoplasm</location>
    </subcellularLocation>
</comment>
<comment type="similarity">
    <text evidence="1">Belongs to the KdsB family.</text>
</comment>
<proteinExistence type="inferred from homology"/>
<sequence length="258" mass="27521">MANLAQPAAKELAGHPLVVIPARMASTRLPGKPLADICGTPMIVQVWRRAMEAGVGRVVVAAAEKEIADAVREAGGEAVLTDPDLPSGSDRVWQAVCEVDPEGHHTVILNVQGDLPTLDPALIRTAYEALVRPGADISTLAATITVEEERTNPNVVKAVASFGEGRLARALYFTRATAPWGEGPLYHHIGLYGYRREALARFVALPPSPLEVREKLEQLRALEAGMAIEVALVDTVPLGVDTPADLEKARAALARRSV</sequence>
<keyword id="KW-0963">Cytoplasm</keyword>
<keyword id="KW-0448">Lipopolysaccharide biosynthesis</keyword>
<keyword id="KW-0548">Nucleotidyltransferase</keyword>
<keyword id="KW-1185">Reference proteome</keyword>
<keyword id="KW-0808">Transferase</keyword>
<protein>
    <recommendedName>
        <fullName evidence="1">3-deoxy-manno-octulosonate cytidylyltransferase</fullName>
        <ecNumber evidence="1">2.7.7.38</ecNumber>
    </recommendedName>
    <alternativeName>
        <fullName evidence="1">CMP-2-keto-3-deoxyoctulosonic acid synthase</fullName>
        <shortName evidence="1">CKS</shortName>
        <shortName evidence="1">CMP-KDO synthase</shortName>
    </alternativeName>
</protein>
<name>KDSB_PARL1</name>
<organism>
    <name type="scientific">Parvibaculum lavamentivorans (strain DS-1 / DSM 13023 / NCIMB 13966)</name>
    <dbReference type="NCBI Taxonomy" id="402881"/>
    <lineage>
        <taxon>Bacteria</taxon>
        <taxon>Pseudomonadati</taxon>
        <taxon>Pseudomonadota</taxon>
        <taxon>Alphaproteobacteria</taxon>
        <taxon>Hyphomicrobiales</taxon>
        <taxon>Parvibaculaceae</taxon>
        <taxon>Parvibaculum</taxon>
    </lineage>
</organism>
<feature type="chain" id="PRO_0000370112" description="3-deoxy-manno-octulosonate cytidylyltransferase">
    <location>
        <begin position="1"/>
        <end position="258"/>
    </location>
</feature>